<gene>
    <name evidence="1" type="primary">aroD</name>
    <name type="ordered locus">ECP_1640</name>
</gene>
<accession>Q0THD6</accession>
<name>AROD_ECOL5</name>
<reference key="1">
    <citation type="journal article" date="2006" name="Mol. Microbiol.">
        <title>Role of pathogenicity island-associated integrases in the genome plasticity of uropathogenic Escherichia coli strain 536.</title>
        <authorList>
            <person name="Hochhut B."/>
            <person name="Wilde C."/>
            <person name="Balling G."/>
            <person name="Middendorf B."/>
            <person name="Dobrindt U."/>
            <person name="Brzuszkiewicz E."/>
            <person name="Gottschalk G."/>
            <person name="Carniel E."/>
            <person name="Hacker J."/>
        </authorList>
    </citation>
    <scope>NUCLEOTIDE SEQUENCE [LARGE SCALE GENOMIC DNA]</scope>
    <source>
        <strain>536 / UPEC</strain>
    </source>
</reference>
<sequence>MKTVTVKDLVIGTGAPKIIVSLMAKDIASVKSEALAYREADFDILEWRVDHYADLSNVESVMAAAKILRETMPEKPLLFTYRSAKEGGEQAISTEAYIALNRAAIDSGLVDMIDLELFTGDDQVKETVAYAHAHDVKVVMSNHDFHKTPEAEEIIARLRKMQSFDADIPKIALMPQSTSDVLTLLAATLEMQEQYADRPIITMSMAKTGVISRLAGEVFGSAATFGAVKKASAPGQISVNDLRTVLTILHQA</sequence>
<feature type="chain" id="PRO_1000043164" description="3-dehydroquinate dehydratase">
    <location>
        <begin position="1"/>
        <end position="252"/>
    </location>
</feature>
<feature type="active site" description="Proton donor/acceptor" evidence="1">
    <location>
        <position position="143"/>
    </location>
</feature>
<feature type="active site" description="Schiff-base intermediate with substrate" evidence="1">
    <location>
        <position position="170"/>
    </location>
</feature>
<feature type="binding site" evidence="1">
    <location>
        <position position="21"/>
    </location>
    <ligand>
        <name>3-dehydroquinate</name>
        <dbReference type="ChEBI" id="CHEBI:32364"/>
    </ligand>
</feature>
<feature type="binding site" evidence="1">
    <location>
        <begin position="46"/>
        <end position="48"/>
    </location>
    <ligand>
        <name>3-dehydroquinate</name>
        <dbReference type="ChEBI" id="CHEBI:32364"/>
    </ligand>
</feature>
<feature type="binding site" evidence="1">
    <location>
        <position position="82"/>
    </location>
    <ligand>
        <name>3-dehydroquinate</name>
        <dbReference type="ChEBI" id="CHEBI:32364"/>
    </ligand>
</feature>
<feature type="binding site" evidence="1">
    <location>
        <position position="213"/>
    </location>
    <ligand>
        <name>3-dehydroquinate</name>
        <dbReference type="ChEBI" id="CHEBI:32364"/>
    </ligand>
</feature>
<feature type="binding site" evidence="1">
    <location>
        <position position="232"/>
    </location>
    <ligand>
        <name>3-dehydroquinate</name>
        <dbReference type="ChEBI" id="CHEBI:32364"/>
    </ligand>
</feature>
<feature type="binding site" evidence="1">
    <location>
        <position position="236"/>
    </location>
    <ligand>
        <name>3-dehydroquinate</name>
        <dbReference type="ChEBI" id="CHEBI:32364"/>
    </ligand>
</feature>
<dbReference type="EC" id="4.2.1.10" evidence="1"/>
<dbReference type="EMBL" id="CP000247">
    <property type="protein sequence ID" value="ABG69643.1"/>
    <property type="molecule type" value="Genomic_DNA"/>
</dbReference>
<dbReference type="RefSeq" id="WP_000860202.1">
    <property type="nucleotide sequence ID" value="NC_008253.1"/>
</dbReference>
<dbReference type="SMR" id="Q0THD6"/>
<dbReference type="KEGG" id="ecp:ECP_1640"/>
<dbReference type="HOGENOM" id="CLU_064444_0_0_6"/>
<dbReference type="UniPathway" id="UPA00053">
    <property type="reaction ID" value="UER00086"/>
</dbReference>
<dbReference type="Proteomes" id="UP000009182">
    <property type="component" value="Chromosome"/>
</dbReference>
<dbReference type="GO" id="GO:0003855">
    <property type="term" value="F:3-dehydroquinate dehydratase activity"/>
    <property type="evidence" value="ECO:0007669"/>
    <property type="project" value="UniProtKB-UniRule"/>
</dbReference>
<dbReference type="GO" id="GO:0046279">
    <property type="term" value="P:3,4-dihydroxybenzoate biosynthetic process"/>
    <property type="evidence" value="ECO:0007669"/>
    <property type="project" value="UniProtKB-ARBA"/>
</dbReference>
<dbReference type="GO" id="GO:0008652">
    <property type="term" value="P:amino acid biosynthetic process"/>
    <property type="evidence" value="ECO:0007669"/>
    <property type="project" value="UniProtKB-KW"/>
</dbReference>
<dbReference type="GO" id="GO:0009073">
    <property type="term" value="P:aromatic amino acid family biosynthetic process"/>
    <property type="evidence" value="ECO:0007669"/>
    <property type="project" value="UniProtKB-KW"/>
</dbReference>
<dbReference type="GO" id="GO:0009423">
    <property type="term" value="P:chorismate biosynthetic process"/>
    <property type="evidence" value="ECO:0007669"/>
    <property type="project" value="UniProtKB-UniRule"/>
</dbReference>
<dbReference type="CDD" id="cd00502">
    <property type="entry name" value="DHQase_I"/>
    <property type="match status" value="1"/>
</dbReference>
<dbReference type="FunFam" id="3.20.20.70:FF:000047">
    <property type="entry name" value="3-dehydroquinate dehydratase"/>
    <property type="match status" value="1"/>
</dbReference>
<dbReference type="Gene3D" id="3.20.20.70">
    <property type="entry name" value="Aldolase class I"/>
    <property type="match status" value="1"/>
</dbReference>
<dbReference type="HAMAP" id="MF_00214">
    <property type="entry name" value="AroD"/>
    <property type="match status" value="1"/>
</dbReference>
<dbReference type="InterPro" id="IPR018508">
    <property type="entry name" value="3-dehydroquinate_DH_AS"/>
</dbReference>
<dbReference type="InterPro" id="IPR013785">
    <property type="entry name" value="Aldolase_TIM"/>
</dbReference>
<dbReference type="InterPro" id="IPR001381">
    <property type="entry name" value="DHquinase_I"/>
</dbReference>
<dbReference type="InterPro" id="IPR050146">
    <property type="entry name" value="Type-I_3-dehydroquinase"/>
</dbReference>
<dbReference type="NCBIfam" id="TIGR01093">
    <property type="entry name" value="aroD"/>
    <property type="match status" value="1"/>
</dbReference>
<dbReference type="PANTHER" id="PTHR43699">
    <property type="entry name" value="3-DEHYDROQUINATE DEHYDRATASE"/>
    <property type="match status" value="1"/>
</dbReference>
<dbReference type="PANTHER" id="PTHR43699:SF1">
    <property type="entry name" value="3-DEHYDROQUINATE DEHYDRATASE"/>
    <property type="match status" value="1"/>
</dbReference>
<dbReference type="Pfam" id="PF01487">
    <property type="entry name" value="DHquinase_I"/>
    <property type="match status" value="1"/>
</dbReference>
<dbReference type="SUPFAM" id="SSF51569">
    <property type="entry name" value="Aldolase"/>
    <property type="match status" value="1"/>
</dbReference>
<dbReference type="PROSITE" id="PS01028">
    <property type="entry name" value="DEHYDROQUINASE_I"/>
    <property type="match status" value="1"/>
</dbReference>
<protein>
    <recommendedName>
        <fullName evidence="1">3-dehydroquinate dehydratase</fullName>
        <shortName evidence="1">3-dehydroquinase</shortName>
        <ecNumber evidence="1">4.2.1.10</ecNumber>
    </recommendedName>
    <alternativeName>
        <fullName evidence="1">Type I DHQase</fullName>
    </alternativeName>
    <alternativeName>
        <fullName evidence="1">Type I dehydroquinase</fullName>
        <shortName evidence="1">DHQ1</shortName>
    </alternativeName>
</protein>
<keyword id="KW-0028">Amino-acid biosynthesis</keyword>
<keyword id="KW-0057">Aromatic amino acid biosynthesis</keyword>
<keyword id="KW-0456">Lyase</keyword>
<keyword id="KW-0704">Schiff base</keyword>
<proteinExistence type="inferred from homology"/>
<comment type="function">
    <text evidence="1">Involved in the third step of the chorismate pathway, which leads to the biosynthesis of aromatic amino acids. Catalyzes the cis-dehydration of 3-dehydroquinate (DHQ) and introduces the first double bond of the aromatic ring to yield 3-dehydroshikimate.</text>
</comment>
<comment type="catalytic activity">
    <reaction evidence="1">
        <text>3-dehydroquinate = 3-dehydroshikimate + H2O</text>
        <dbReference type="Rhea" id="RHEA:21096"/>
        <dbReference type="ChEBI" id="CHEBI:15377"/>
        <dbReference type="ChEBI" id="CHEBI:16630"/>
        <dbReference type="ChEBI" id="CHEBI:32364"/>
        <dbReference type="EC" id="4.2.1.10"/>
    </reaction>
</comment>
<comment type="pathway">
    <text evidence="1">Metabolic intermediate biosynthesis; chorismate biosynthesis; chorismate from D-erythrose 4-phosphate and phosphoenolpyruvate: step 3/7.</text>
</comment>
<comment type="subunit">
    <text evidence="1">Homodimer.</text>
</comment>
<comment type="similarity">
    <text evidence="1">Belongs to the type-I 3-dehydroquinase family.</text>
</comment>
<evidence type="ECO:0000255" key="1">
    <source>
        <dbReference type="HAMAP-Rule" id="MF_00214"/>
    </source>
</evidence>
<organism>
    <name type="scientific">Escherichia coli O6:K15:H31 (strain 536 / UPEC)</name>
    <dbReference type="NCBI Taxonomy" id="362663"/>
    <lineage>
        <taxon>Bacteria</taxon>
        <taxon>Pseudomonadati</taxon>
        <taxon>Pseudomonadota</taxon>
        <taxon>Gammaproteobacteria</taxon>
        <taxon>Enterobacterales</taxon>
        <taxon>Enterobacteriaceae</taxon>
        <taxon>Escherichia</taxon>
    </lineage>
</organism>